<accession>Q0T1X8</accession>
<evidence type="ECO:0000255" key="1">
    <source>
        <dbReference type="HAMAP-Rule" id="MF_01647"/>
    </source>
</evidence>
<comment type="function">
    <text evidence="1">Converts 3-phenylpropionate-dihydrodiol (PP-dihydrodiol) and cinnamic acid-dihydrodiol (CI-dihydrodiol) into 3-(2,3-dihydroxylphenyl)propanoic acid (DHPP) and 2,3-dihydroxicinnamic acid (DHCI), respectively.</text>
</comment>
<comment type="catalytic activity">
    <reaction evidence="1">
        <text>3-(cis-5,6-dihydroxycyclohexa-1,3-dien-1-yl)propanoate + NAD(+) = 3-(2,3-dihydroxyphenyl)propanoate + NADH + H(+)</text>
        <dbReference type="Rhea" id="RHEA:25062"/>
        <dbReference type="ChEBI" id="CHEBI:15378"/>
        <dbReference type="ChEBI" id="CHEBI:46951"/>
        <dbReference type="ChEBI" id="CHEBI:57540"/>
        <dbReference type="ChEBI" id="CHEBI:57945"/>
        <dbReference type="ChEBI" id="CHEBI:60087"/>
        <dbReference type="EC" id="1.3.1.87"/>
    </reaction>
</comment>
<comment type="catalytic activity">
    <reaction evidence="1">
        <text>(2E)-3-(cis-5,6-dihydroxycyclohexa-1,3-dien-1-yl)prop-2-enoate + NAD(+) = (2E)-3-(2,3-dihydroxyphenyl)prop-2-enoate + NADH + H(+)</text>
        <dbReference type="Rhea" id="RHEA:25066"/>
        <dbReference type="ChEBI" id="CHEBI:15378"/>
        <dbReference type="ChEBI" id="CHEBI:57540"/>
        <dbReference type="ChEBI" id="CHEBI:57945"/>
        <dbReference type="ChEBI" id="CHEBI:58642"/>
        <dbReference type="ChEBI" id="CHEBI:61451"/>
        <dbReference type="EC" id="1.3.1.87"/>
    </reaction>
</comment>
<comment type="pathway">
    <text evidence="1">Aromatic compound metabolism; 3-phenylpropanoate degradation.</text>
</comment>
<comment type="similarity">
    <text evidence="1">Belongs to the short-chain dehydrogenases/reductases (SDR) family.</text>
</comment>
<reference key="1">
    <citation type="journal article" date="2006" name="BMC Genomics">
        <title>Complete genome sequence of Shigella flexneri 5b and comparison with Shigella flexneri 2a.</title>
        <authorList>
            <person name="Nie H."/>
            <person name="Yang F."/>
            <person name="Zhang X."/>
            <person name="Yang J."/>
            <person name="Chen L."/>
            <person name="Wang J."/>
            <person name="Xiong Z."/>
            <person name="Peng J."/>
            <person name="Sun L."/>
            <person name="Dong J."/>
            <person name="Xue Y."/>
            <person name="Xu X."/>
            <person name="Chen S."/>
            <person name="Yao Z."/>
            <person name="Shen Y."/>
            <person name="Jin Q."/>
        </authorList>
    </citation>
    <scope>NUCLEOTIDE SEQUENCE [LARGE SCALE GENOMIC DNA]</scope>
    <source>
        <strain>8401</strain>
    </source>
</reference>
<organism>
    <name type="scientific">Shigella flexneri serotype 5b (strain 8401)</name>
    <dbReference type="NCBI Taxonomy" id="373384"/>
    <lineage>
        <taxon>Bacteria</taxon>
        <taxon>Pseudomonadati</taxon>
        <taxon>Pseudomonadota</taxon>
        <taxon>Gammaproteobacteria</taxon>
        <taxon>Enterobacterales</taxon>
        <taxon>Enterobacteriaceae</taxon>
        <taxon>Shigella</taxon>
    </lineage>
</organism>
<gene>
    <name evidence="1" type="primary">hcaB</name>
    <name type="ordered locus">SFV_2589</name>
</gene>
<protein>
    <recommendedName>
        <fullName evidence="1">3-phenylpropionate-dihydrodiol/cinnamic acid-dihydrodiol dehydrogenase</fullName>
        <ecNumber evidence="1">1.3.1.87</ecNumber>
    </recommendedName>
    <alternativeName>
        <fullName evidence="1">2,3-dihydroxy-2,3-dihydrophenylpropionate dehydrogenase</fullName>
    </alternativeName>
    <alternativeName>
        <fullName evidence="1">3-(cis-5,6-dihydroxycyclohexa-1,3-dien-1-yl)propanoate dehydrogenase</fullName>
    </alternativeName>
    <alternativeName>
        <fullName evidence="1">CI-dihydrodiol dehydrogenase</fullName>
    </alternativeName>
    <alternativeName>
        <fullName evidence="1">Cis-3-(2-carboxyethenyl)-3,5-cyclohexadiene-1,2-diol dehydrogenase</fullName>
    </alternativeName>
    <alternativeName>
        <fullName evidence="1">Cis-3-(2-carboxyethyl)-3,5-cyclohexadiene-1,2-diol dehydrogenase</fullName>
    </alternativeName>
    <alternativeName>
        <fullName evidence="1">PP-dihydrodiol dehydrogenase</fullName>
    </alternativeName>
</protein>
<feature type="chain" id="PRO_0000333766" description="3-phenylpropionate-dihydrodiol/cinnamic acid-dihydrodiol dehydrogenase">
    <location>
        <begin position="1"/>
        <end position="270"/>
    </location>
</feature>
<feature type="active site" description="Proton acceptor" evidence="1">
    <location>
        <position position="156"/>
    </location>
</feature>
<feature type="binding site" evidence="1">
    <location>
        <begin position="10"/>
        <end position="34"/>
    </location>
    <ligand>
        <name>NAD(+)</name>
        <dbReference type="ChEBI" id="CHEBI:57540"/>
    </ligand>
</feature>
<feature type="binding site" evidence="1">
    <location>
        <position position="143"/>
    </location>
    <ligand>
        <name>substrate</name>
    </ligand>
</feature>
<proteinExistence type="inferred from homology"/>
<sequence>MSDLHNESIFITGGGSGLGLALVERFIEEGAQVATLELSAAKVASLRQRFGEHILAVEGNVTCYADYQRAVDQILTRSGKLDCFIGNAGIWDHNASLVNTPAETLETGFHELFNVNVLGYLLGAKACAPALIASEGSMIFTLSNAAWYPGGGGPLYTTSKHAATGLIRQLAYELAPKVRVNGVGPCGMASDLRGPQALGQSETSIMQSLTPEKIAAILPLQFFPQPADFTGPYVMLASRRNNRALSGVMINADAGLAIRGIRHVAAGLDL</sequence>
<dbReference type="EC" id="1.3.1.87" evidence="1"/>
<dbReference type="EMBL" id="CP000266">
    <property type="protein sequence ID" value="ABF04687.1"/>
    <property type="molecule type" value="Genomic_DNA"/>
</dbReference>
<dbReference type="RefSeq" id="WP_001281382.1">
    <property type="nucleotide sequence ID" value="NC_008258.1"/>
</dbReference>
<dbReference type="SMR" id="Q0T1X8"/>
<dbReference type="KEGG" id="sfv:SFV_2589"/>
<dbReference type="HOGENOM" id="CLU_010194_1_0_6"/>
<dbReference type="UniPathway" id="UPA00714"/>
<dbReference type="Proteomes" id="UP000000659">
    <property type="component" value="Chromosome"/>
</dbReference>
<dbReference type="GO" id="GO:0018498">
    <property type="term" value="F:2,3-dihydroxy-2,3-dihydro-phenylpropionate dehydrogenase activity"/>
    <property type="evidence" value="ECO:0007669"/>
    <property type="project" value="UniProtKB-UniRule"/>
</dbReference>
<dbReference type="GO" id="GO:0019380">
    <property type="term" value="P:3-phenylpropionate catabolic process"/>
    <property type="evidence" value="ECO:0007669"/>
    <property type="project" value="UniProtKB-UniRule"/>
</dbReference>
<dbReference type="CDD" id="cd05348">
    <property type="entry name" value="BphB-like_SDR_c"/>
    <property type="match status" value="1"/>
</dbReference>
<dbReference type="FunFam" id="3.40.50.720:FF:000151">
    <property type="entry name" value="3-phenylpropionate-dihydrodiol/cinnamic acid-dihydrodiol dehydrogenase"/>
    <property type="match status" value="1"/>
</dbReference>
<dbReference type="Gene3D" id="3.40.50.720">
    <property type="entry name" value="NAD(P)-binding Rossmann-like Domain"/>
    <property type="match status" value="1"/>
</dbReference>
<dbReference type="HAMAP" id="MF_01647">
    <property type="entry name" value="HcaB"/>
    <property type="match status" value="1"/>
</dbReference>
<dbReference type="InterPro" id="IPR047950">
    <property type="entry name" value="BphB-like_SDR"/>
</dbReference>
<dbReference type="InterPro" id="IPR023643">
    <property type="entry name" value="Dihydrodiol_DH_HcaB"/>
</dbReference>
<dbReference type="InterPro" id="IPR036291">
    <property type="entry name" value="NAD(P)-bd_dom_sf"/>
</dbReference>
<dbReference type="InterPro" id="IPR020904">
    <property type="entry name" value="Sc_DH/Rdtase_CS"/>
</dbReference>
<dbReference type="InterPro" id="IPR002347">
    <property type="entry name" value="SDR_fam"/>
</dbReference>
<dbReference type="NCBIfam" id="NF042950">
    <property type="entry name" value="3PPDhyd_Dh_HcaB"/>
    <property type="match status" value="1"/>
</dbReference>
<dbReference type="NCBIfam" id="NF004849">
    <property type="entry name" value="PRK06200.1"/>
    <property type="match status" value="1"/>
</dbReference>
<dbReference type="PANTHER" id="PTHR43943:SF17">
    <property type="entry name" value="3-PHENYLPROPIONATE-DIHYDRODIOL_CINNAMIC ACID-DIHYDRODIOL DEHYDROGENASE"/>
    <property type="match status" value="1"/>
</dbReference>
<dbReference type="PANTHER" id="PTHR43943">
    <property type="entry name" value="DEHYDROGENASE/REDUCTASE (SDR FAMILY) MEMBER 4"/>
    <property type="match status" value="1"/>
</dbReference>
<dbReference type="Pfam" id="PF00106">
    <property type="entry name" value="adh_short"/>
    <property type="match status" value="1"/>
</dbReference>
<dbReference type="PRINTS" id="PR00081">
    <property type="entry name" value="GDHRDH"/>
</dbReference>
<dbReference type="SUPFAM" id="SSF51735">
    <property type="entry name" value="NAD(P)-binding Rossmann-fold domains"/>
    <property type="match status" value="1"/>
</dbReference>
<dbReference type="PROSITE" id="PS00061">
    <property type="entry name" value="ADH_SHORT"/>
    <property type="match status" value="1"/>
</dbReference>
<keyword id="KW-0058">Aromatic hydrocarbons catabolism</keyword>
<keyword id="KW-0520">NAD</keyword>
<keyword id="KW-0560">Oxidoreductase</keyword>
<name>HCAB_SHIF8</name>